<protein>
    <recommendedName>
        <fullName>Advanced glycosylation end product-specific receptor</fullName>
    </recommendedName>
    <alternativeName>
        <fullName>Receptor for advanced glycosylation end products</fullName>
    </alternativeName>
</protein>
<dbReference type="EMBL" id="L33413">
    <property type="protein sequence ID" value="AAA42027.1"/>
    <property type="molecule type" value="mRNA"/>
</dbReference>
<dbReference type="SMR" id="Q63495"/>
<dbReference type="FunCoup" id="Q63495">
    <property type="interactions" value="10"/>
</dbReference>
<dbReference type="IntAct" id="Q63495">
    <property type="interactions" value="2"/>
</dbReference>
<dbReference type="STRING" id="10116.ENSRNOP00000000508"/>
<dbReference type="BindingDB" id="Q63495"/>
<dbReference type="ChEMBL" id="CHEMBL2176847"/>
<dbReference type="GlyCosmos" id="Q63495">
    <property type="glycosylation" value="2 sites, No reported glycans"/>
</dbReference>
<dbReference type="GlyGen" id="Q63495">
    <property type="glycosylation" value="2 sites"/>
</dbReference>
<dbReference type="iPTMnet" id="Q63495"/>
<dbReference type="PhosphoSitePlus" id="Q63495"/>
<dbReference type="PaxDb" id="10116-ENSRNOP00000000508"/>
<dbReference type="UCSC" id="RGD:69258">
    <property type="organism name" value="rat"/>
</dbReference>
<dbReference type="AGR" id="RGD:69258"/>
<dbReference type="RGD" id="69258">
    <property type="gene designation" value="Ager"/>
</dbReference>
<dbReference type="eggNOG" id="ENOG502SQ8N">
    <property type="taxonomic scope" value="Eukaryota"/>
</dbReference>
<dbReference type="InParanoid" id="Q63495"/>
<dbReference type="PhylomeDB" id="Q63495"/>
<dbReference type="Reactome" id="R-RNO-445989">
    <property type="pathway name" value="TAK1-dependent IKK and NF-kappa-B activation"/>
</dbReference>
<dbReference type="Reactome" id="R-RNO-879415">
    <property type="pathway name" value="Advanced glycosylation endproduct receptor signaling"/>
</dbReference>
<dbReference type="Reactome" id="R-RNO-933542">
    <property type="pathway name" value="TRAF6 mediated NF-kB activation"/>
</dbReference>
<dbReference type="PRO" id="PR:Q63495"/>
<dbReference type="Proteomes" id="UP000002494">
    <property type="component" value="Unplaced"/>
</dbReference>
<dbReference type="GO" id="GO:0016324">
    <property type="term" value="C:apical plasma membrane"/>
    <property type="evidence" value="ECO:0000266"/>
    <property type="project" value="RGD"/>
</dbReference>
<dbReference type="GO" id="GO:0030424">
    <property type="term" value="C:axon"/>
    <property type="evidence" value="ECO:0000314"/>
    <property type="project" value="RGD"/>
</dbReference>
<dbReference type="GO" id="GO:0009925">
    <property type="term" value="C:basal plasma membrane"/>
    <property type="evidence" value="ECO:0000314"/>
    <property type="project" value="RGD"/>
</dbReference>
<dbReference type="GO" id="GO:0009986">
    <property type="term" value="C:cell surface"/>
    <property type="evidence" value="ECO:0000314"/>
    <property type="project" value="RGD"/>
</dbReference>
<dbReference type="GO" id="GO:0005769">
    <property type="term" value="C:early endosome"/>
    <property type="evidence" value="ECO:0007669"/>
    <property type="project" value="UniProtKB-SubCell"/>
</dbReference>
<dbReference type="GO" id="GO:0005615">
    <property type="term" value="C:extracellular space"/>
    <property type="evidence" value="ECO:0000314"/>
    <property type="project" value="RGD"/>
</dbReference>
<dbReference type="GO" id="GO:0043025">
    <property type="term" value="C:neuronal cell body"/>
    <property type="evidence" value="ECO:0000314"/>
    <property type="project" value="RGD"/>
</dbReference>
<dbReference type="GO" id="GO:0005634">
    <property type="term" value="C:nucleus"/>
    <property type="evidence" value="ECO:0000250"/>
    <property type="project" value="UniProtKB"/>
</dbReference>
<dbReference type="GO" id="GO:0001891">
    <property type="term" value="C:phagocytic cup"/>
    <property type="evidence" value="ECO:0000250"/>
    <property type="project" value="UniProtKB"/>
</dbReference>
<dbReference type="GO" id="GO:0005886">
    <property type="term" value="C:plasma membrane"/>
    <property type="evidence" value="ECO:0000318"/>
    <property type="project" value="GO_Central"/>
</dbReference>
<dbReference type="GO" id="GO:0001540">
    <property type="term" value="F:amyloid-beta binding"/>
    <property type="evidence" value="ECO:0000266"/>
    <property type="project" value="RGD"/>
</dbReference>
<dbReference type="GO" id="GO:0003677">
    <property type="term" value="F:DNA binding"/>
    <property type="evidence" value="ECO:0000250"/>
    <property type="project" value="UniProtKB"/>
</dbReference>
<dbReference type="GO" id="GO:0070379">
    <property type="term" value="F:high mobility group box 1 binding"/>
    <property type="evidence" value="ECO:0000353"/>
    <property type="project" value="RGD"/>
</dbReference>
<dbReference type="GO" id="GO:0042393">
    <property type="term" value="F:histone binding"/>
    <property type="evidence" value="ECO:0000250"/>
    <property type="project" value="UniProtKB"/>
</dbReference>
<dbReference type="GO" id="GO:0042802">
    <property type="term" value="F:identical protein binding"/>
    <property type="evidence" value="ECO:0000266"/>
    <property type="project" value="RGD"/>
</dbReference>
<dbReference type="GO" id="GO:0005055">
    <property type="term" value="F:laminin receptor activity"/>
    <property type="evidence" value="ECO:0000318"/>
    <property type="project" value="GO_Central"/>
</dbReference>
<dbReference type="GO" id="GO:0060090">
    <property type="term" value="F:molecular adaptor activity"/>
    <property type="evidence" value="ECO:0000266"/>
    <property type="project" value="RGD"/>
</dbReference>
<dbReference type="GO" id="GO:0044877">
    <property type="term" value="F:protein-containing complex binding"/>
    <property type="evidence" value="ECO:0000266"/>
    <property type="project" value="RGD"/>
</dbReference>
<dbReference type="GO" id="GO:0003723">
    <property type="term" value="F:RNA binding"/>
    <property type="evidence" value="ECO:0000250"/>
    <property type="project" value="UniProtKB"/>
</dbReference>
<dbReference type="GO" id="GO:0044548">
    <property type="term" value="F:S100 protein binding"/>
    <property type="evidence" value="ECO:0000353"/>
    <property type="project" value="RGD"/>
</dbReference>
<dbReference type="GO" id="GO:0038023">
    <property type="term" value="F:signaling receptor activity"/>
    <property type="evidence" value="ECO:0000266"/>
    <property type="project" value="RGD"/>
</dbReference>
<dbReference type="GO" id="GO:0048143">
    <property type="term" value="P:astrocyte activation"/>
    <property type="evidence" value="ECO:0000266"/>
    <property type="project" value="RGD"/>
</dbReference>
<dbReference type="GO" id="GO:0014002">
    <property type="term" value="P:astrocyte development"/>
    <property type="evidence" value="ECO:0000266"/>
    <property type="project" value="RGD"/>
</dbReference>
<dbReference type="GO" id="GO:0007259">
    <property type="term" value="P:cell surface receptor signaling pathway via JAK-STAT"/>
    <property type="evidence" value="ECO:0000315"/>
    <property type="project" value="RGD"/>
</dbReference>
<dbReference type="GO" id="GO:1904646">
    <property type="term" value="P:cellular response to amyloid-beta"/>
    <property type="evidence" value="ECO:0000266"/>
    <property type="project" value="RGD"/>
</dbReference>
<dbReference type="GO" id="GO:0071398">
    <property type="term" value="P:cellular response to fatty acid"/>
    <property type="evidence" value="ECO:0000270"/>
    <property type="project" value="RGD"/>
</dbReference>
<dbReference type="GO" id="GO:0071333">
    <property type="term" value="P:cellular response to glucose stimulus"/>
    <property type="evidence" value="ECO:0000270"/>
    <property type="project" value="RGD"/>
</dbReference>
<dbReference type="GO" id="GO:0070301">
    <property type="term" value="P:cellular response to hydrogen peroxide"/>
    <property type="evidence" value="ECO:0000270"/>
    <property type="project" value="RGD"/>
</dbReference>
<dbReference type="GO" id="GO:0071466">
    <property type="term" value="P:cellular response to xenobiotic stimulus"/>
    <property type="evidence" value="ECO:0000270"/>
    <property type="project" value="RGD"/>
</dbReference>
<dbReference type="GO" id="GO:0010255">
    <property type="term" value="P:glucose mediated signaling pathway"/>
    <property type="evidence" value="ECO:0000266"/>
    <property type="project" value="RGD"/>
</dbReference>
<dbReference type="GO" id="GO:0009100">
    <property type="term" value="P:glycoprotein metabolic process"/>
    <property type="evidence" value="ECO:0000270"/>
    <property type="project" value="RGD"/>
</dbReference>
<dbReference type="GO" id="GO:0050930">
    <property type="term" value="P:induction of positive chemotaxis"/>
    <property type="evidence" value="ECO:0000266"/>
    <property type="project" value="RGD"/>
</dbReference>
<dbReference type="GO" id="GO:0006954">
    <property type="term" value="P:inflammatory response"/>
    <property type="evidence" value="ECO:0000266"/>
    <property type="project" value="RGD"/>
</dbReference>
<dbReference type="GO" id="GO:0007611">
    <property type="term" value="P:learning or memory"/>
    <property type="evidence" value="ECO:0000266"/>
    <property type="project" value="RGD"/>
</dbReference>
<dbReference type="GO" id="GO:0030324">
    <property type="term" value="P:lung development"/>
    <property type="evidence" value="ECO:0000270"/>
    <property type="project" value="RGD"/>
</dbReference>
<dbReference type="GO" id="GO:0001774">
    <property type="term" value="P:microglial cell activation"/>
    <property type="evidence" value="ECO:0000266"/>
    <property type="project" value="RGD"/>
</dbReference>
<dbReference type="GO" id="GO:1903523">
    <property type="term" value="P:negative regulation of blood circulation"/>
    <property type="evidence" value="ECO:0000266"/>
    <property type="project" value="RGD"/>
</dbReference>
<dbReference type="GO" id="GO:0007162">
    <property type="term" value="P:negative regulation of cell adhesion"/>
    <property type="evidence" value="ECO:0000315"/>
    <property type="project" value="RGD"/>
</dbReference>
<dbReference type="GO" id="GO:0032966">
    <property type="term" value="P:negative regulation of collagen biosynthetic process"/>
    <property type="evidence" value="ECO:0000315"/>
    <property type="project" value="RGD"/>
</dbReference>
<dbReference type="GO" id="GO:0010596">
    <property type="term" value="P:negative regulation of endothelial cell migration"/>
    <property type="evidence" value="ECO:0000315"/>
    <property type="project" value="RGD"/>
</dbReference>
<dbReference type="GO" id="GO:0001937">
    <property type="term" value="P:negative regulation of endothelial cell proliferation"/>
    <property type="evidence" value="ECO:0000315"/>
    <property type="project" value="RGD"/>
</dbReference>
<dbReference type="GO" id="GO:0032693">
    <property type="term" value="P:negative regulation of interleukin-10 production"/>
    <property type="evidence" value="ECO:0000266"/>
    <property type="project" value="RGD"/>
</dbReference>
<dbReference type="GO" id="GO:1900453">
    <property type="term" value="P:negative regulation of long-term synaptic depression"/>
    <property type="evidence" value="ECO:0000266"/>
    <property type="project" value="RGD"/>
</dbReference>
<dbReference type="GO" id="GO:1900272">
    <property type="term" value="P:negative regulation of long-term synaptic potentiation"/>
    <property type="evidence" value="ECO:0000266"/>
    <property type="project" value="RGD"/>
</dbReference>
<dbReference type="GO" id="GO:0033689">
    <property type="term" value="P:negative regulation of osteoblast proliferation"/>
    <property type="evidence" value="ECO:0000270"/>
    <property type="project" value="RGD"/>
</dbReference>
<dbReference type="GO" id="GO:0031175">
    <property type="term" value="P:neuron projection development"/>
    <property type="evidence" value="ECO:0000315"/>
    <property type="project" value="RGD"/>
</dbReference>
<dbReference type="GO" id="GO:0006909">
    <property type="term" value="P:phagocytosis"/>
    <property type="evidence" value="ECO:0000266"/>
    <property type="project" value="RGD"/>
</dbReference>
<dbReference type="GO" id="GO:0042104">
    <property type="term" value="P:positive regulation of activated T cell proliferation"/>
    <property type="evidence" value="ECO:0000266"/>
    <property type="project" value="RGD"/>
</dbReference>
<dbReference type="GO" id="GO:1902993">
    <property type="term" value="P:positive regulation of amyloid precursor protein catabolic process"/>
    <property type="evidence" value="ECO:0000266"/>
    <property type="project" value="RGD"/>
</dbReference>
<dbReference type="GO" id="GO:0043065">
    <property type="term" value="P:positive regulation of apoptotic process"/>
    <property type="evidence" value="ECO:0000315"/>
    <property type="project" value="RGD"/>
</dbReference>
<dbReference type="GO" id="GO:0010508">
    <property type="term" value="P:positive regulation of autophagy"/>
    <property type="evidence" value="ECO:0000315"/>
    <property type="project" value="RGD"/>
</dbReference>
<dbReference type="GO" id="GO:0030335">
    <property type="term" value="P:positive regulation of cell migration"/>
    <property type="evidence" value="ECO:0000315"/>
    <property type="project" value="RGD"/>
</dbReference>
<dbReference type="GO" id="GO:0032722">
    <property type="term" value="P:positive regulation of chemokine production"/>
    <property type="evidence" value="ECO:0000266"/>
    <property type="project" value="RGD"/>
</dbReference>
<dbReference type="GO" id="GO:2001200">
    <property type="term" value="P:positive regulation of dendritic cell differentiation"/>
    <property type="evidence" value="ECO:0000266"/>
    <property type="project" value="RGD"/>
</dbReference>
<dbReference type="GO" id="GO:2000105">
    <property type="term" value="P:positive regulation of DNA-templated DNA replication"/>
    <property type="evidence" value="ECO:0000250"/>
    <property type="project" value="UniProtKB"/>
</dbReference>
<dbReference type="GO" id="GO:2000781">
    <property type="term" value="P:positive regulation of double-strand break repair"/>
    <property type="evidence" value="ECO:0000250"/>
    <property type="project" value="UniProtKB"/>
</dbReference>
<dbReference type="GO" id="GO:2000353">
    <property type="term" value="P:positive regulation of endothelial cell apoptotic process"/>
    <property type="evidence" value="ECO:0000315"/>
    <property type="project" value="RGD"/>
</dbReference>
<dbReference type="GO" id="GO:1904472">
    <property type="term" value="P:positive regulation of endothelin production"/>
    <property type="evidence" value="ECO:0000266"/>
    <property type="project" value="RGD"/>
</dbReference>
<dbReference type="GO" id="GO:0010718">
    <property type="term" value="P:positive regulation of epithelial to mesenchymal transition"/>
    <property type="evidence" value="ECO:0000315"/>
    <property type="project" value="RGD"/>
</dbReference>
<dbReference type="GO" id="GO:0070374">
    <property type="term" value="P:positive regulation of ERK1 and ERK2 cascade"/>
    <property type="evidence" value="ECO:0000266"/>
    <property type="project" value="RGD"/>
</dbReference>
<dbReference type="GO" id="GO:0010763">
    <property type="term" value="P:positive regulation of fibroblast migration"/>
    <property type="evidence" value="ECO:0000315"/>
    <property type="project" value="RGD"/>
</dbReference>
<dbReference type="GO" id="GO:0048146">
    <property type="term" value="P:positive regulation of fibroblast proliferation"/>
    <property type="evidence" value="ECO:0000315"/>
    <property type="project" value="RGD"/>
</dbReference>
<dbReference type="GO" id="GO:0010628">
    <property type="term" value="P:positive regulation of gene expression"/>
    <property type="evidence" value="ECO:0000315"/>
    <property type="project" value="RGD"/>
</dbReference>
<dbReference type="GO" id="GO:0034116">
    <property type="term" value="P:positive regulation of heterotypic cell-cell adhesion"/>
    <property type="evidence" value="ECO:0000266"/>
    <property type="project" value="RGD"/>
</dbReference>
<dbReference type="GO" id="GO:0032731">
    <property type="term" value="P:positive regulation of interleukin-1 beta production"/>
    <property type="evidence" value="ECO:0000266"/>
    <property type="project" value="RGD"/>
</dbReference>
<dbReference type="GO" id="GO:0032735">
    <property type="term" value="P:positive regulation of interleukin-12 production"/>
    <property type="evidence" value="ECO:0000266"/>
    <property type="project" value="RGD"/>
</dbReference>
<dbReference type="GO" id="GO:0032755">
    <property type="term" value="P:positive regulation of interleukin-6 production"/>
    <property type="evidence" value="ECO:0000266"/>
    <property type="project" value="RGD"/>
</dbReference>
<dbReference type="GO" id="GO:0046330">
    <property type="term" value="P:positive regulation of JNK cascade"/>
    <property type="evidence" value="ECO:0000266"/>
    <property type="project" value="RGD"/>
</dbReference>
<dbReference type="GO" id="GO:0071639">
    <property type="term" value="P:positive regulation of monocyte chemotactic protein-1 production"/>
    <property type="evidence" value="ECO:0000266"/>
    <property type="project" value="RGD"/>
</dbReference>
<dbReference type="GO" id="GO:2000439">
    <property type="term" value="P:positive regulation of monocyte extravasation"/>
    <property type="evidence" value="ECO:0000266"/>
    <property type="project" value="RGD"/>
</dbReference>
<dbReference type="GO" id="GO:0043525">
    <property type="term" value="P:positive regulation of neuron apoptotic process"/>
    <property type="evidence" value="ECO:0000315"/>
    <property type="project" value="RGD"/>
</dbReference>
<dbReference type="GO" id="GO:1901224">
    <property type="term" value="P:positive regulation of non-canonical NF-kappaB signal transduction"/>
    <property type="evidence" value="ECO:0000266"/>
    <property type="project" value="RGD"/>
</dbReference>
<dbReference type="GO" id="GO:1900745">
    <property type="term" value="P:positive regulation of p38MAPK cascade"/>
    <property type="evidence" value="ECO:0000266"/>
    <property type="project" value="RGD"/>
</dbReference>
<dbReference type="GO" id="GO:0050766">
    <property type="term" value="P:positive regulation of phagocytosis"/>
    <property type="evidence" value="ECO:0000315"/>
    <property type="project" value="RGD"/>
</dbReference>
<dbReference type="GO" id="GO:0060100">
    <property type="term" value="P:positive regulation of phagocytosis, engulfment"/>
    <property type="evidence" value="ECO:0000315"/>
    <property type="project" value="RGD"/>
</dbReference>
<dbReference type="GO" id="GO:2000379">
    <property type="term" value="P:positive regulation of reactive oxygen species metabolic process"/>
    <property type="evidence" value="ECO:0000315"/>
    <property type="project" value="RGD"/>
</dbReference>
<dbReference type="GO" id="GO:0014911">
    <property type="term" value="P:positive regulation of smooth muscle cell migration"/>
    <property type="evidence" value="ECO:0000315"/>
    <property type="project" value="RGD"/>
</dbReference>
<dbReference type="GO" id="GO:0048661">
    <property type="term" value="P:positive regulation of smooth muscle cell proliferation"/>
    <property type="evidence" value="ECO:0000315"/>
    <property type="project" value="RGD"/>
</dbReference>
<dbReference type="GO" id="GO:0032760">
    <property type="term" value="P:positive regulation of tumor necrosis factor production"/>
    <property type="evidence" value="ECO:0000266"/>
    <property type="project" value="RGD"/>
</dbReference>
<dbReference type="GO" id="GO:2000676">
    <property type="term" value="P:positive regulation of type B pancreatic cell apoptotic process"/>
    <property type="evidence" value="ECO:0000315"/>
    <property type="project" value="RGD"/>
</dbReference>
<dbReference type="GO" id="GO:0072657">
    <property type="term" value="P:protein localization to membrane"/>
    <property type="evidence" value="ECO:0000266"/>
    <property type="project" value="RGD"/>
</dbReference>
<dbReference type="GO" id="GO:0072659">
    <property type="term" value="P:protein localization to plasma membrane"/>
    <property type="evidence" value="ECO:0000314"/>
    <property type="project" value="RGD"/>
</dbReference>
<dbReference type="GO" id="GO:2000514">
    <property type="term" value="P:regulation of CD4-positive, alpha-beta T cell activation"/>
    <property type="evidence" value="ECO:0000266"/>
    <property type="project" value="RGD"/>
</dbReference>
<dbReference type="GO" id="GO:0050727">
    <property type="term" value="P:regulation of inflammatory response"/>
    <property type="evidence" value="ECO:0000266"/>
    <property type="project" value="RGD"/>
</dbReference>
<dbReference type="GO" id="GO:1900271">
    <property type="term" value="P:regulation of long-term synaptic potentiation"/>
    <property type="evidence" value="ECO:0000266"/>
    <property type="project" value="RGD"/>
</dbReference>
<dbReference type="GO" id="GO:1900744">
    <property type="term" value="P:regulation of p38MAPK cascade"/>
    <property type="evidence" value="ECO:0000266"/>
    <property type="project" value="RGD"/>
</dbReference>
<dbReference type="GO" id="GO:0150003">
    <property type="term" value="P:regulation of spontaneous synaptic transmission"/>
    <property type="evidence" value="ECO:0000266"/>
    <property type="project" value="RGD"/>
</dbReference>
<dbReference type="GO" id="GO:0001914">
    <property type="term" value="P:regulation of T cell mediated cytotoxicity"/>
    <property type="evidence" value="ECO:0000266"/>
    <property type="project" value="RGD"/>
</dbReference>
<dbReference type="GO" id="GO:0014823">
    <property type="term" value="P:response to activity"/>
    <property type="evidence" value="ECO:0000270"/>
    <property type="project" value="RGD"/>
</dbReference>
<dbReference type="GO" id="GO:1904645">
    <property type="term" value="P:response to amyloid-beta"/>
    <property type="evidence" value="ECO:0000266"/>
    <property type="project" value="RGD"/>
</dbReference>
<dbReference type="GO" id="GO:0045471">
    <property type="term" value="P:response to ethanol"/>
    <property type="evidence" value="ECO:0000270"/>
    <property type="project" value="RGD"/>
</dbReference>
<dbReference type="GO" id="GO:0009750">
    <property type="term" value="P:response to fructose"/>
    <property type="evidence" value="ECO:0000270"/>
    <property type="project" value="RGD"/>
</dbReference>
<dbReference type="GO" id="GO:0033595">
    <property type="term" value="P:response to genistein"/>
    <property type="evidence" value="ECO:0000270"/>
    <property type="project" value="RGD"/>
</dbReference>
<dbReference type="GO" id="GO:0055093">
    <property type="term" value="P:response to hyperoxia"/>
    <property type="evidence" value="ECO:0000270"/>
    <property type="project" value="RGD"/>
</dbReference>
<dbReference type="GO" id="GO:0001666">
    <property type="term" value="P:response to hypoxia"/>
    <property type="evidence" value="ECO:0000266"/>
    <property type="project" value="RGD"/>
</dbReference>
<dbReference type="GO" id="GO:0051595">
    <property type="term" value="P:response to methylglyoxal"/>
    <property type="evidence" value="ECO:0000270"/>
    <property type="project" value="RGD"/>
</dbReference>
<dbReference type="GO" id="GO:0072714">
    <property type="term" value="P:response to selenite ion"/>
    <property type="evidence" value="ECO:0000270"/>
    <property type="project" value="RGD"/>
</dbReference>
<dbReference type="GO" id="GO:0033189">
    <property type="term" value="P:response to vitamin A"/>
    <property type="evidence" value="ECO:0000270"/>
    <property type="project" value="RGD"/>
</dbReference>
<dbReference type="GO" id="GO:0045056">
    <property type="term" value="P:transcytosis"/>
    <property type="evidence" value="ECO:0000266"/>
    <property type="project" value="RGD"/>
</dbReference>
<dbReference type="GO" id="GO:0060290">
    <property type="term" value="P:transdifferentiation"/>
    <property type="evidence" value="ECO:0000270"/>
    <property type="project" value="RGD"/>
</dbReference>
<dbReference type="GO" id="GO:0150104">
    <property type="term" value="P:transport across blood-brain barrier"/>
    <property type="evidence" value="ECO:0000266"/>
    <property type="project" value="RGD"/>
</dbReference>
<dbReference type="CDD" id="cd00096">
    <property type="entry name" value="Ig"/>
    <property type="match status" value="1"/>
</dbReference>
<dbReference type="FunFam" id="2.60.40.10:FF:000969">
    <property type="entry name" value="Advanced glycosylation end product-specific receptor"/>
    <property type="match status" value="1"/>
</dbReference>
<dbReference type="Gene3D" id="2.60.40.10">
    <property type="entry name" value="Immunoglobulins"/>
    <property type="match status" value="3"/>
</dbReference>
<dbReference type="InterPro" id="IPR013162">
    <property type="entry name" value="CD80_C2-set"/>
</dbReference>
<dbReference type="InterPro" id="IPR007110">
    <property type="entry name" value="Ig-like_dom"/>
</dbReference>
<dbReference type="InterPro" id="IPR036179">
    <property type="entry name" value="Ig-like_dom_sf"/>
</dbReference>
<dbReference type="InterPro" id="IPR013783">
    <property type="entry name" value="Ig-like_fold"/>
</dbReference>
<dbReference type="InterPro" id="IPR003006">
    <property type="entry name" value="Ig/MHC_CS"/>
</dbReference>
<dbReference type="InterPro" id="IPR003599">
    <property type="entry name" value="Ig_sub"/>
</dbReference>
<dbReference type="InterPro" id="IPR003598">
    <property type="entry name" value="Ig_sub2"/>
</dbReference>
<dbReference type="InterPro" id="IPR051116">
    <property type="entry name" value="Surface_Rcpt/Adhesion_Mol"/>
</dbReference>
<dbReference type="PANTHER" id="PTHR11973:SF20">
    <property type="entry name" value="ADVANCED GLYCOSYLATION END PRODUCT-SPECIFIC RECEPTOR"/>
    <property type="match status" value="1"/>
</dbReference>
<dbReference type="PANTHER" id="PTHR11973">
    <property type="entry name" value="CELL SURFACE GLYCOPROTEIN MUC18-RELATED"/>
    <property type="match status" value="1"/>
</dbReference>
<dbReference type="Pfam" id="PF08205">
    <property type="entry name" value="C2-set_2"/>
    <property type="match status" value="1"/>
</dbReference>
<dbReference type="Pfam" id="PF13895">
    <property type="entry name" value="Ig_2"/>
    <property type="match status" value="1"/>
</dbReference>
<dbReference type="SMART" id="SM00409">
    <property type="entry name" value="IG"/>
    <property type="match status" value="2"/>
</dbReference>
<dbReference type="SMART" id="SM00408">
    <property type="entry name" value="IGc2"/>
    <property type="match status" value="2"/>
</dbReference>
<dbReference type="SUPFAM" id="SSF48726">
    <property type="entry name" value="Immunoglobulin"/>
    <property type="match status" value="3"/>
</dbReference>
<dbReference type="PROSITE" id="PS50835">
    <property type="entry name" value="IG_LIKE"/>
    <property type="match status" value="3"/>
</dbReference>
<dbReference type="PROSITE" id="PS00290">
    <property type="entry name" value="IG_MHC"/>
    <property type="match status" value="1"/>
</dbReference>
<evidence type="ECO:0000250" key="1">
    <source>
        <dbReference type="UniProtKB" id="Q15109"/>
    </source>
</evidence>
<evidence type="ECO:0000250" key="2">
    <source>
        <dbReference type="UniProtKB" id="Q62151"/>
    </source>
</evidence>
<evidence type="ECO:0000255" key="3"/>
<evidence type="ECO:0000255" key="4">
    <source>
        <dbReference type="PROSITE-ProRule" id="PRU00114"/>
    </source>
</evidence>
<evidence type="ECO:0000256" key="5">
    <source>
        <dbReference type="SAM" id="MobiDB-lite"/>
    </source>
</evidence>
<evidence type="ECO:0000269" key="6">
    <source>
    </source>
</evidence>
<evidence type="ECO:0000269" key="7">
    <source>
    </source>
</evidence>
<evidence type="ECO:0007744" key="8">
    <source>
    </source>
</evidence>
<organism>
    <name type="scientific">Rattus norvegicus</name>
    <name type="common">Rat</name>
    <dbReference type="NCBI Taxonomy" id="10116"/>
    <lineage>
        <taxon>Eukaryota</taxon>
        <taxon>Metazoa</taxon>
        <taxon>Chordata</taxon>
        <taxon>Craniata</taxon>
        <taxon>Vertebrata</taxon>
        <taxon>Euteleostomi</taxon>
        <taxon>Mammalia</taxon>
        <taxon>Eutheria</taxon>
        <taxon>Euarchontoglires</taxon>
        <taxon>Glires</taxon>
        <taxon>Rodentia</taxon>
        <taxon>Myomorpha</taxon>
        <taxon>Muroidea</taxon>
        <taxon>Muridae</taxon>
        <taxon>Murinae</taxon>
        <taxon>Rattus</taxon>
    </lineage>
</organism>
<keyword id="KW-1003">Cell membrane</keyword>
<keyword id="KW-0966">Cell projection</keyword>
<keyword id="KW-1015">Disulfide bond</keyword>
<keyword id="KW-0227">DNA damage</keyword>
<keyword id="KW-0234">DNA repair</keyword>
<keyword id="KW-0235">DNA replication</keyword>
<keyword id="KW-0238">DNA-binding</keyword>
<keyword id="KW-0967">Endosome</keyword>
<keyword id="KW-0325">Glycoprotein</keyword>
<keyword id="KW-0393">Immunoglobulin domain</keyword>
<keyword id="KW-0395">Inflammatory response</keyword>
<keyword id="KW-0472">Membrane</keyword>
<keyword id="KW-0539">Nucleus</keyword>
<keyword id="KW-0581">Phagocytosis</keyword>
<keyword id="KW-0597">Phosphoprotein</keyword>
<keyword id="KW-0675">Receptor</keyword>
<keyword id="KW-1185">Reference proteome</keyword>
<keyword id="KW-0677">Repeat</keyword>
<keyword id="KW-0694">RNA-binding</keyword>
<keyword id="KW-0732">Signal</keyword>
<keyword id="KW-0812">Transmembrane</keyword>
<keyword id="KW-1133">Transmembrane helix</keyword>
<keyword id="KW-0832">Ubl conjugation</keyword>
<accession>Q63495</accession>
<reference key="1">
    <citation type="journal article" date="1997" name="Mol. Pharmacol.">
        <title>Recombinant advanced glycation end product receptor pharmacokinetics in normal and diabetic rats.</title>
        <authorList>
            <person name="Renard C."/>
            <person name="Chappey O."/>
            <person name="Wautier M.P."/>
            <person name="Nagashima M."/>
            <person name="Lundh E."/>
            <person name="Morser J."/>
            <person name="Zhao L."/>
            <person name="Schmidt A.M."/>
            <person name="Scherrmann J.M."/>
            <person name="Wautier J.-L."/>
        </authorList>
    </citation>
    <scope>NUCLEOTIDE SEQUENCE [MRNA]</scope>
    <source>
        <strain>Sprague-Dawley</strain>
        <tissue>Lung</tissue>
    </source>
</reference>
<reference key="2">
    <citation type="journal article" date="2010" name="Circ. Res.">
        <title>S100B interaction with the receptor for advanced glycation end products (RAGE): a novel receptor-mediated mechanism for myocyte apoptosis postinfarction.</title>
        <authorList>
            <person name="Tsoporis J.N."/>
            <person name="Izhar S."/>
            <person name="Leong-Poi H."/>
            <person name="Desjardins J.F."/>
            <person name="Huttunen H.J."/>
            <person name="Parker T.G."/>
        </authorList>
    </citation>
    <scope>FUNCTION</scope>
    <scope>SUBCELLULAR LOCATION</scope>
    <scope>INTERACTION WITH S100B AND S100A1</scope>
    <scope>INDUCTION</scope>
    <scope>TISSUE SPECIFICITY</scope>
</reference>
<reference key="3">
    <citation type="journal article" date="2012" name="Nat. Commun.">
        <title>Quantitative maps of protein phosphorylation sites across 14 different rat organs and tissues.</title>
        <authorList>
            <person name="Lundby A."/>
            <person name="Secher A."/>
            <person name="Lage K."/>
            <person name="Nordsborg N.B."/>
            <person name="Dmytriyev A."/>
            <person name="Lundby C."/>
            <person name="Olsen J.V."/>
        </authorList>
    </citation>
    <scope>PHOSPHORYLATION [LARGE SCALE ANALYSIS] AT SER-376 AND SER-389</scope>
    <scope>IDENTIFICATION BY MASS SPECTROMETRY [LARGE SCALE ANALYSIS]</scope>
</reference>
<reference key="4">
    <citation type="journal article" date="2017" name="Mol. Med. Report.">
        <title>HMGB1 regulates P-glycoprotein expression in status epilepticus rat brains via the RAGE/NF-kappaB signaling pathway.</title>
        <authorList>
            <person name="Xie Y."/>
            <person name="Yu N."/>
            <person name="Chen Y."/>
            <person name="Zhang K."/>
            <person name="Ma H.Y."/>
            <person name="Di Q."/>
        </authorList>
    </citation>
    <scope>FUNCTION</scope>
    <scope>TISSUE SPECIFICITY</scope>
</reference>
<name>RAGE_RAT</name>
<comment type="function">
    <text evidence="1 2 6 7">Cell surface pattern recognition receptor that senses endogenous stress signals with a broad ligand repertoire including advanced glycation end products, S100 proteins, high-mobility group box 1 protein/HMGB1, amyloid beta/APP oligomers, nucleic acids, histones, phospholipids and glycosaminoglycans (PubMed:19910580, PubMed:28627626). Advanced glycosylation end products are nonenzymatically glycosylated proteins which accumulate in vascular tissue in aging and at an accelerated rate in diabetes. These ligands accumulate at inflammatory sites during the pathogenesis of various diseases including diabetes, vascular complications, neurodegenerative disorders and cancers, and RAGE transduces their binding into pro-inflammatory responses. Upon ligand binding, uses TIRAP and MYD88 as adapters to transduce the signal ultimately leading to the induction of inflammatory cytokines IL6, IL8 and TNFalpha through activation of NF-kappa-B. Interaction with S100A12 on endothelium, mononuclear phagocytes, and lymphocytes triggers cellular activation, with generation of key pro-inflammatory mediators (By similarity). Interaction with S100B after myocardial infarction may play a role in myocyte apoptosis by activating ERK1/2 and p53/TP53 signaling (By similarity). Contributes to the translocation of amyloid-beta peptide (ABPP) across the cell membrane from the extracellular to the intracellular space in cortical neurons. ABPP-initiated RAGE signaling, especially stimulation of p38 mitogen-activated protein kinase (MAPK), has the capacity to drive a transport system delivering ABPP as a complex with RAGE to the intraneuronal space. Participates in endothelial albumin transcytosis together with HMGB1 through the RAGE/SRC/Caveolin-1 pathway, leading to endothelial hyperpermeability. Mediates the loading of HMGB1 in extracellular vesicles (EVs) that shuttle HMGB1 to hepatocytes by transferrin-mediated endocytosis and subsequently promote hepatocyte pyroptosis by activating the NLRP3 inflammasome. Binds to DNA and promotes extracellular hypomethylated DNA (CpG DNA) uptake by cells via the endosomal route to activate inflammatory responses (By similarity). Mediates phagocytosis by non-professional phagocytes (NPP) and this is enhanced by binding to ligands including RNA, DNA, HMGB1 and histones (By similarity). Promotes NPP-mediated phagocytosis of Saccharomyces cerevisiae spores by binding to RNA attached to the spore wall (By similarity). Also promotes NPP-mediated phagocytosis of apoptotic cells (By similarity). Following DNA damage, recruited to DNA double-strand break sites where it colocalizes with the MRN repair complex via interaction with double-strand break repair protein MRE11 (By similarity). Enhances the endonuclease activity of MRE11, promoting the end resection of damaged DNA (By similarity). Promotes DNA damage repair in trophoblasts which enhances trophoblast invasion and contributes to placental development and maintenance (By similarity). Protects cells from DNA replication stress by localizing to damaged replication forks where it stabilizes the MCM2-7 complex and promotes faithful progression of the replication fork (By similarity).</text>
</comment>
<comment type="subunit">
    <text evidence="1 2">Constitutive homodimer; disulfide-linked. Forms homooligomers (By similarity). Interacts with S100A1 and APP (By similarity). Interacts with S100B, S100A12 and S100A14. Interacts with TIRAP. Interacts with HMGB1 (By similarity). Interacts with LGP2; this interaction plays an important role in AGER-mediated pro-inflammatory responses and cytokine release (By similarity). Interacts with double-strand break repair protein MRE11 which is a core component of the MRN complex; the interaction enhances MRE11 endonuclease activity and promotes DNA repair (By similarity). Interacts with the MCM2-7 complex via interaction with complex member MCM2; the interaction is increased following DNA replication stress and stabilizes the MCM2-7 complex at replication forks (By similarity).</text>
</comment>
<comment type="interaction">
    <interactant intactId="EBI-6479195">
        <id>Q63495</id>
    </interactant>
    <interactant intactId="EBI-2696631">
        <id>P04631</id>
        <label>S100b</label>
    </interactant>
    <organismsDiffer>false</organismsDiffer>
    <experiments>3</experiments>
</comment>
<comment type="subcellular location">
    <subcellularLocation>
        <location evidence="6">Cell membrane</location>
        <topology evidence="3">Single-pass type I membrane protein</topology>
    </subcellularLocation>
    <subcellularLocation>
        <location evidence="1">Cell projection</location>
        <location evidence="1">Phagocytic cup</location>
    </subcellularLocation>
    <subcellularLocation>
        <location evidence="1">Early endosome</location>
    </subcellularLocation>
    <subcellularLocation>
        <location evidence="2">Nucleus</location>
    </subcellularLocation>
    <text evidence="2">Nuclear translocation is enhanced by irradiation, hypoxia and reperfusion injury to brain or kidney.</text>
</comment>
<comment type="tissue specificity">
    <text evidence="6 7">Endothelial cells and cardiomyocytes (PubMed:19910580). Expressed in brain (PubMed:28627626).</text>
</comment>
<comment type="induction">
    <text evidence="6">Up-regulated in periinfarct ventricular myocardium.</text>
</comment>
<comment type="PTM">
    <text evidence="1 2">Phosphorylated on its cytoplasmic domain by PKCzeta/PRKCZ upon ligand binding (By similarity). Phosphorylated by ATM following DNA damage (By similarity).</text>
</comment>
<comment type="PTM">
    <text evidence="1">Targeted by the ubiquitin E3 ligase subunit FBXO10 to mediate its ubiquitination and degradation.</text>
</comment>
<feature type="signal peptide" evidence="3">
    <location>
        <begin position="1"/>
        <end position="22"/>
    </location>
</feature>
<feature type="chain" id="PRO_0000014925" description="Advanced glycosylation end product-specific receptor">
    <location>
        <begin position="23"/>
        <end position="402"/>
    </location>
</feature>
<feature type="topological domain" description="Extracellular" evidence="3">
    <location>
        <begin position="23"/>
        <end position="341"/>
    </location>
</feature>
<feature type="transmembrane region" description="Helical" evidence="3">
    <location>
        <begin position="342"/>
        <end position="362"/>
    </location>
</feature>
<feature type="topological domain" description="Cytoplasmic" evidence="3">
    <location>
        <begin position="363"/>
        <end position="402"/>
    </location>
</feature>
<feature type="domain" description="Ig-like V-type">
    <location>
        <begin position="23"/>
        <end position="109"/>
    </location>
</feature>
<feature type="domain" description="Ig-like C2-type 1">
    <location>
        <begin position="123"/>
        <end position="219"/>
    </location>
</feature>
<feature type="domain" description="Ig-like C2-type 2">
    <location>
        <begin position="233"/>
        <end position="315"/>
    </location>
</feature>
<feature type="region of interest" description="Disordered" evidence="5">
    <location>
        <begin position="368"/>
        <end position="402"/>
    </location>
</feature>
<feature type="compositionally biased region" description="Acidic residues" evidence="5">
    <location>
        <begin position="376"/>
        <end position="394"/>
    </location>
</feature>
<feature type="modified residue" description="Phosphoserine" evidence="8">
    <location>
        <position position="376"/>
    </location>
</feature>
<feature type="modified residue" description="Phosphoserine" evidence="8">
    <location>
        <position position="389"/>
    </location>
</feature>
<feature type="glycosylation site" description="N-linked (GlcNAc...) asparagine" evidence="3">
    <location>
        <position position="25"/>
    </location>
</feature>
<feature type="glycosylation site" description="N-linked (GlcNAc...) asparagine" evidence="3">
    <location>
        <position position="80"/>
    </location>
</feature>
<feature type="disulfide bond" evidence="4">
    <location>
        <begin position="38"/>
        <end position="98"/>
    </location>
</feature>
<feature type="disulfide bond" evidence="4">
    <location>
        <begin position="143"/>
        <end position="206"/>
    </location>
</feature>
<feature type="disulfide bond" description="Interchain" evidence="4">
    <location>
        <position position="257"/>
    </location>
</feature>
<feature type="disulfide bond" description="Interchain" evidence="4">
    <location>
        <position position="299"/>
    </location>
</feature>
<proteinExistence type="evidence at protein level"/>
<sequence length="402" mass="42664">MPTGTVARAWVLVLALWGAVAGGQNITARIGEPLMLSCKGAPKKPTQKLEWKLNTGRTEAWKVLSPQGDPWDSVARILPNGSLLLPAIGIVDEGTFRCRATNRLGKEVKSNYRVRVYQIPGKPEIVNPASELTANVPNKVGTCVSEGSYPAGTLSWHLDGKPLIPDGKGTVVKEETRRHPETGLFTLRSELTVTPAQGGTTPTYSCSFSLGLPRRRPLNTAPIQPRVREPLPPEGIQLLVEPEGGTVAPGGTVTLTCAISAQPPPQIHWIKDGTPLPLAPSPVLLLPEVGHEDEGIYSCVATHPSHGPQESPPVNIRVTETGDEGQAAGSVDGSGLGTLALALGILGGLGIAALLIGAILWRKRQPRLEERKAPESQEDEEERAELNQSEEAEMPENGAGGP</sequence>
<gene>
    <name type="primary">Ager</name>
    <name type="synonym">Rage</name>
</gene>